<name>MURD_BACSU</name>
<protein>
    <recommendedName>
        <fullName>UDP-N-acetylmuramoylalanine--D-glutamate ligase</fullName>
        <ecNumber>6.3.2.9</ecNumber>
    </recommendedName>
    <alternativeName>
        <fullName>D-glutamic acid-adding enzyme</fullName>
    </alternativeName>
    <alternativeName>
        <fullName>UDP-N-acetylmuramoyl-L-alanyl-D-glutamate synthetase</fullName>
    </alternativeName>
</protein>
<dbReference type="EC" id="6.3.2.9"/>
<dbReference type="EMBL" id="Z15056">
    <property type="protein sequence ID" value="CAA78769.1"/>
    <property type="molecule type" value="Genomic_DNA"/>
</dbReference>
<dbReference type="EMBL" id="AL009126">
    <property type="protein sequence ID" value="CAB13393.1"/>
    <property type="molecule type" value="Genomic_DNA"/>
</dbReference>
<dbReference type="EMBL" id="X64258">
    <property type="protein sequence ID" value="CAA45555.1"/>
    <property type="molecule type" value="Genomic_DNA"/>
</dbReference>
<dbReference type="PIR" id="D47691">
    <property type="entry name" value="D47691"/>
</dbReference>
<dbReference type="RefSeq" id="NP_389403.1">
    <property type="nucleotide sequence ID" value="NC_000964.3"/>
</dbReference>
<dbReference type="RefSeq" id="WP_003232189.1">
    <property type="nucleotide sequence ID" value="NZ_OZ025638.1"/>
</dbReference>
<dbReference type="SMR" id="Q03522"/>
<dbReference type="FunCoup" id="Q03522">
    <property type="interactions" value="504"/>
</dbReference>
<dbReference type="STRING" id="224308.BSU15200"/>
<dbReference type="PaxDb" id="224308-BSU15200"/>
<dbReference type="DNASU" id="935950"/>
<dbReference type="EnsemblBacteria" id="CAB13393">
    <property type="protein sequence ID" value="CAB13393"/>
    <property type="gene ID" value="BSU_15200"/>
</dbReference>
<dbReference type="GeneID" id="935950"/>
<dbReference type="KEGG" id="bsu:BSU15200"/>
<dbReference type="PATRIC" id="fig|224308.179.peg.1658"/>
<dbReference type="eggNOG" id="COG0771">
    <property type="taxonomic scope" value="Bacteria"/>
</dbReference>
<dbReference type="InParanoid" id="Q03522"/>
<dbReference type="OrthoDB" id="9809796at2"/>
<dbReference type="PhylomeDB" id="Q03522"/>
<dbReference type="BioCyc" id="BSUB:BSU15200-MONOMER"/>
<dbReference type="UniPathway" id="UPA00219"/>
<dbReference type="Proteomes" id="UP000001570">
    <property type="component" value="Chromosome"/>
</dbReference>
<dbReference type="GO" id="GO:0005737">
    <property type="term" value="C:cytoplasm"/>
    <property type="evidence" value="ECO:0007669"/>
    <property type="project" value="UniProtKB-SubCell"/>
</dbReference>
<dbReference type="GO" id="GO:0005524">
    <property type="term" value="F:ATP binding"/>
    <property type="evidence" value="ECO:0007669"/>
    <property type="project" value="UniProtKB-UniRule"/>
</dbReference>
<dbReference type="GO" id="GO:0008764">
    <property type="term" value="F:UDP-N-acetylmuramoylalanine-D-glutamate ligase activity"/>
    <property type="evidence" value="ECO:0007669"/>
    <property type="project" value="UniProtKB-UniRule"/>
</dbReference>
<dbReference type="GO" id="GO:0051301">
    <property type="term" value="P:cell division"/>
    <property type="evidence" value="ECO:0007669"/>
    <property type="project" value="UniProtKB-KW"/>
</dbReference>
<dbReference type="GO" id="GO:0071555">
    <property type="term" value="P:cell wall organization"/>
    <property type="evidence" value="ECO:0007669"/>
    <property type="project" value="UniProtKB-KW"/>
</dbReference>
<dbReference type="GO" id="GO:0009252">
    <property type="term" value="P:peptidoglycan biosynthetic process"/>
    <property type="evidence" value="ECO:0007669"/>
    <property type="project" value="UniProtKB-UniRule"/>
</dbReference>
<dbReference type="GO" id="GO:0008360">
    <property type="term" value="P:regulation of cell shape"/>
    <property type="evidence" value="ECO:0007669"/>
    <property type="project" value="UniProtKB-KW"/>
</dbReference>
<dbReference type="Gene3D" id="3.90.190.20">
    <property type="entry name" value="Mur ligase, C-terminal domain"/>
    <property type="match status" value="1"/>
</dbReference>
<dbReference type="Gene3D" id="3.40.1190.10">
    <property type="entry name" value="Mur-like, catalytic domain"/>
    <property type="match status" value="1"/>
</dbReference>
<dbReference type="Gene3D" id="3.40.50.720">
    <property type="entry name" value="NAD(P)-binding Rossmann-like Domain"/>
    <property type="match status" value="1"/>
</dbReference>
<dbReference type="HAMAP" id="MF_00639">
    <property type="entry name" value="MurD"/>
    <property type="match status" value="1"/>
</dbReference>
<dbReference type="InterPro" id="IPR036565">
    <property type="entry name" value="Mur-like_cat_sf"/>
</dbReference>
<dbReference type="InterPro" id="IPR004101">
    <property type="entry name" value="Mur_ligase_C"/>
</dbReference>
<dbReference type="InterPro" id="IPR036615">
    <property type="entry name" value="Mur_ligase_C_dom_sf"/>
</dbReference>
<dbReference type="InterPro" id="IPR013221">
    <property type="entry name" value="Mur_ligase_cen"/>
</dbReference>
<dbReference type="InterPro" id="IPR005762">
    <property type="entry name" value="MurD"/>
</dbReference>
<dbReference type="NCBIfam" id="TIGR01087">
    <property type="entry name" value="murD"/>
    <property type="match status" value="1"/>
</dbReference>
<dbReference type="PANTHER" id="PTHR43692">
    <property type="entry name" value="UDP-N-ACETYLMURAMOYLALANINE--D-GLUTAMATE LIGASE"/>
    <property type="match status" value="1"/>
</dbReference>
<dbReference type="PANTHER" id="PTHR43692:SF1">
    <property type="entry name" value="UDP-N-ACETYLMURAMOYLALANINE--D-GLUTAMATE LIGASE"/>
    <property type="match status" value="1"/>
</dbReference>
<dbReference type="Pfam" id="PF02875">
    <property type="entry name" value="Mur_ligase_C"/>
    <property type="match status" value="1"/>
</dbReference>
<dbReference type="Pfam" id="PF08245">
    <property type="entry name" value="Mur_ligase_M"/>
    <property type="match status" value="1"/>
</dbReference>
<dbReference type="Pfam" id="PF21799">
    <property type="entry name" value="MurD-like_N"/>
    <property type="match status" value="1"/>
</dbReference>
<dbReference type="SUPFAM" id="SSF51984">
    <property type="entry name" value="MurCD N-terminal domain"/>
    <property type="match status" value="1"/>
</dbReference>
<dbReference type="SUPFAM" id="SSF53623">
    <property type="entry name" value="MurD-like peptide ligases, catalytic domain"/>
    <property type="match status" value="1"/>
</dbReference>
<dbReference type="SUPFAM" id="SSF53244">
    <property type="entry name" value="MurD-like peptide ligases, peptide-binding domain"/>
    <property type="match status" value="1"/>
</dbReference>
<reference key="1">
    <citation type="journal article" date="1993" name="J. Gen. Microbiol.">
        <title>DNA sequence of the murE-murD region of Bacillus subtilis 168.</title>
        <authorList>
            <person name="Daniel R.A."/>
            <person name="Errington J."/>
        </authorList>
    </citation>
    <scope>NUCLEOTIDE SEQUENCE [GENOMIC DNA]</scope>
    <source>
        <strain>168</strain>
    </source>
</reference>
<reference key="2">
    <citation type="journal article" date="1997" name="Nature">
        <title>The complete genome sequence of the Gram-positive bacterium Bacillus subtilis.</title>
        <authorList>
            <person name="Kunst F."/>
            <person name="Ogasawara N."/>
            <person name="Moszer I."/>
            <person name="Albertini A.M."/>
            <person name="Alloni G."/>
            <person name="Azevedo V."/>
            <person name="Bertero M.G."/>
            <person name="Bessieres P."/>
            <person name="Bolotin A."/>
            <person name="Borchert S."/>
            <person name="Borriss R."/>
            <person name="Boursier L."/>
            <person name="Brans A."/>
            <person name="Braun M."/>
            <person name="Brignell S.C."/>
            <person name="Bron S."/>
            <person name="Brouillet S."/>
            <person name="Bruschi C.V."/>
            <person name="Caldwell B."/>
            <person name="Capuano V."/>
            <person name="Carter N.M."/>
            <person name="Choi S.-K."/>
            <person name="Codani J.-J."/>
            <person name="Connerton I.F."/>
            <person name="Cummings N.J."/>
            <person name="Daniel R.A."/>
            <person name="Denizot F."/>
            <person name="Devine K.M."/>
            <person name="Duesterhoeft A."/>
            <person name="Ehrlich S.D."/>
            <person name="Emmerson P.T."/>
            <person name="Entian K.-D."/>
            <person name="Errington J."/>
            <person name="Fabret C."/>
            <person name="Ferrari E."/>
            <person name="Foulger D."/>
            <person name="Fritz C."/>
            <person name="Fujita M."/>
            <person name="Fujita Y."/>
            <person name="Fuma S."/>
            <person name="Galizzi A."/>
            <person name="Galleron N."/>
            <person name="Ghim S.-Y."/>
            <person name="Glaser P."/>
            <person name="Goffeau A."/>
            <person name="Golightly E.J."/>
            <person name="Grandi G."/>
            <person name="Guiseppi G."/>
            <person name="Guy B.J."/>
            <person name="Haga K."/>
            <person name="Haiech J."/>
            <person name="Harwood C.R."/>
            <person name="Henaut A."/>
            <person name="Hilbert H."/>
            <person name="Holsappel S."/>
            <person name="Hosono S."/>
            <person name="Hullo M.-F."/>
            <person name="Itaya M."/>
            <person name="Jones L.-M."/>
            <person name="Joris B."/>
            <person name="Karamata D."/>
            <person name="Kasahara Y."/>
            <person name="Klaerr-Blanchard M."/>
            <person name="Klein C."/>
            <person name="Kobayashi Y."/>
            <person name="Koetter P."/>
            <person name="Koningstein G."/>
            <person name="Krogh S."/>
            <person name="Kumano M."/>
            <person name="Kurita K."/>
            <person name="Lapidus A."/>
            <person name="Lardinois S."/>
            <person name="Lauber J."/>
            <person name="Lazarevic V."/>
            <person name="Lee S.-M."/>
            <person name="Levine A."/>
            <person name="Liu H."/>
            <person name="Masuda S."/>
            <person name="Mauel C."/>
            <person name="Medigue C."/>
            <person name="Medina N."/>
            <person name="Mellado R.P."/>
            <person name="Mizuno M."/>
            <person name="Moestl D."/>
            <person name="Nakai S."/>
            <person name="Noback M."/>
            <person name="Noone D."/>
            <person name="O'Reilly M."/>
            <person name="Ogawa K."/>
            <person name="Ogiwara A."/>
            <person name="Oudega B."/>
            <person name="Park S.-H."/>
            <person name="Parro V."/>
            <person name="Pohl T.M."/>
            <person name="Portetelle D."/>
            <person name="Porwollik S."/>
            <person name="Prescott A.M."/>
            <person name="Presecan E."/>
            <person name="Pujic P."/>
            <person name="Purnelle B."/>
            <person name="Rapoport G."/>
            <person name="Rey M."/>
            <person name="Reynolds S."/>
            <person name="Rieger M."/>
            <person name="Rivolta C."/>
            <person name="Rocha E."/>
            <person name="Roche B."/>
            <person name="Rose M."/>
            <person name="Sadaie Y."/>
            <person name="Sato T."/>
            <person name="Scanlan E."/>
            <person name="Schleich S."/>
            <person name="Schroeter R."/>
            <person name="Scoffone F."/>
            <person name="Sekiguchi J."/>
            <person name="Sekowska A."/>
            <person name="Seror S.J."/>
            <person name="Serror P."/>
            <person name="Shin B.-S."/>
            <person name="Soldo B."/>
            <person name="Sorokin A."/>
            <person name="Tacconi E."/>
            <person name="Takagi T."/>
            <person name="Takahashi H."/>
            <person name="Takemaru K."/>
            <person name="Takeuchi M."/>
            <person name="Tamakoshi A."/>
            <person name="Tanaka T."/>
            <person name="Terpstra P."/>
            <person name="Tognoni A."/>
            <person name="Tosato V."/>
            <person name="Uchiyama S."/>
            <person name="Vandenbol M."/>
            <person name="Vannier F."/>
            <person name="Vassarotti A."/>
            <person name="Viari A."/>
            <person name="Wambutt R."/>
            <person name="Wedler E."/>
            <person name="Wedler H."/>
            <person name="Weitzenegger T."/>
            <person name="Winters P."/>
            <person name="Wipat A."/>
            <person name="Yamamoto H."/>
            <person name="Yamane K."/>
            <person name="Yasumoto K."/>
            <person name="Yata K."/>
            <person name="Yoshida K."/>
            <person name="Yoshikawa H.-F."/>
            <person name="Zumstein E."/>
            <person name="Yoshikawa H."/>
            <person name="Danchin A."/>
        </authorList>
    </citation>
    <scope>NUCLEOTIDE SEQUENCE [LARGE SCALE GENOMIC DNA]</scope>
    <source>
        <strain>168</strain>
    </source>
</reference>
<reference key="3">
    <citation type="journal article" date="1992" name="Biochimie">
        <title>A Bacillus subtilis morphogene cluster that includes spoVE is homologous to the mra region of Escherichia coli.</title>
        <authorList>
            <person name="Henriques A.O."/>
            <person name="de Lencastre H."/>
            <person name="Piggot P.J."/>
        </authorList>
    </citation>
    <scope>NUCLEOTIDE SEQUENCE [GENOMIC DNA] OF 82-451</scope>
    <source>
        <strain>168</strain>
    </source>
</reference>
<evidence type="ECO:0000250" key="1"/>
<evidence type="ECO:0000255" key="2"/>
<evidence type="ECO:0000305" key="3"/>
<gene>
    <name type="primary">murD</name>
    <name type="ordered locus">BSU15200</name>
</gene>
<organism>
    <name type="scientific">Bacillus subtilis (strain 168)</name>
    <dbReference type="NCBI Taxonomy" id="224308"/>
    <lineage>
        <taxon>Bacteria</taxon>
        <taxon>Bacillati</taxon>
        <taxon>Bacillota</taxon>
        <taxon>Bacilli</taxon>
        <taxon>Bacillales</taxon>
        <taxon>Bacillaceae</taxon>
        <taxon>Bacillus</taxon>
    </lineage>
</organism>
<feature type="chain" id="PRO_0000108966" description="UDP-N-acetylmuramoylalanine--D-glutamate ligase">
    <location>
        <begin position="1"/>
        <end position="451"/>
    </location>
</feature>
<feature type="binding site" evidence="2">
    <location>
        <begin position="120"/>
        <end position="126"/>
    </location>
    <ligand>
        <name>ATP</name>
        <dbReference type="ChEBI" id="CHEBI:30616"/>
    </ligand>
</feature>
<feature type="sequence conflict" description="In Ref. 3; CAA45555." evidence="3" ref="3">
    <original>A</original>
    <variation>R</variation>
    <location>
        <position position="342"/>
    </location>
</feature>
<keyword id="KW-0067">ATP-binding</keyword>
<keyword id="KW-0131">Cell cycle</keyword>
<keyword id="KW-0132">Cell division</keyword>
<keyword id="KW-0133">Cell shape</keyword>
<keyword id="KW-0961">Cell wall biogenesis/degradation</keyword>
<keyword id="KW-0963">Cytoplasm</keyword>
<keyword id="KW-0436">Ligase</keyword>
<keyword id="KW-0547">Nucleotide-binding</keyword>
<keyword id="KW-0573">Peptidoglycan synthesis</keyword>
<keyword id="KW-1185">Reference proteome</keyword>
<sequence>MENDQFLQKQHFLILGLAKSGYAAASILHEKGIYVAVNDQKPFEENEPAQKLSEKGIEVVCGEHPVSLFDQHQITILIKNPGIPYENIMVQEAEKRGIPVWTEIELAYYLTSAKFIGITGSNGKTTTTTLIYEMLKADSQKALIAGNIGTVASEVAYHADGDEWIVTELSSFQLMGTHAFRPEISLILNVFDAHLDYHHTRENYEKAKQKVYLHQTASDKAIVNQDDETVVRLAEAGKAEIVPFSVSKTLEQGAYVKDSMIMFNGEAILPLEEVVLPGAHNLENILAAIAVVKTAGASNEAVKKVLTSFTGVKHRLQYVTTVNGRKFYNDSKATNILATSKALSAFDKPVILLAGGLDRGNGFDDLKPYMKHVKAVLTFGQTAPKLEKLGNELGIQHVKRVDNVEQAVSAAFALSNEGDVILLSPACASWDQFKTFEERGDMFIDAVHMLK</sequence>
<accession>Q03522</accession>
<accession>Q59246</accession>
<comment type="function">
    <text evidence="1">Cell wall formation. Catalyzes the addition of glutamate to the nucleotide precursor UDP-N-acetylmuramoyl-L-alanine (UMA).</text>
</comment>
<comment type="catalytic activity">
    <reaction>
        <text>UDP-N-acetyl-alpha-D-muramoyl-L-alanine + D-glutamate + ATP = UDP-N-acetyl-alpha-D-muramoyl-L-alanyl-D-glutamate + ADP + phosphate + H(+)</text>
        <dbReference type="Rhea" id="RHEA:16429"/>
        <dbReference type="ChEBI" id="CHEBI:15378"/>
        <dbReference type="ChEBI" id="CHEBI:29986"/>
        <dbReference type="ChEBI" id="CHEBI:30616"/>
        <dbReference type="ChEBI" id="CHEBI:43474"/>
        <dbReference type="ChEBI" id="CHEBI:83898"/>
        <dbReference type="ChEBI" id="CHEBI:83900"/>
        <dbReference type="ChEBI" id="CHEBI:456216"/>
        <dbReference type="EC" id="6.3.2.9"/>
    </reaction>
</comment>
<comment type="pathway">
    <text>Cell wall biogenesis; peptidoglycan biosynthesis.</text>
</comment>
<comment type="subcellular location">
    <subcellularLocation>
        <location evidence="1">Cytoplasm</location>
    </subcellularLocation>
</comment>
<comment type="similarity">
    <text evidence="3">Belongs to the MurCDEF family.</text>
</comment>
<proteinExistence type="inferred from homology"/>